<organism>
    <name type="scientific">Paracentrotus lividus</name>
    <name type="common">Common sea urchin</name>
    <dbReference type="NCBI Taxonomy" id="7656"/>
    <lineage>
        <taxon>Eukaryota</taxon>
        <taxon>Metazoa</taxon>
        <taxon>Echinodermata</taxon>
        <taxon>Eleutherozoa</taxon>
        <taxon>Echinozoa</taxon>
        <taxon>Echinoidea</taxon>
        <taxon>Euechinoidea</taxon>
        <taxon>Echinacea</taxon>
        <taxon>Camarodonta</taxon>
        <taxon>Echinidea</taxon>
        <taxon>Echinidae</taxon>
        <taxon>Paracentrotus</taxon>
    </lineage>
</organism>
<comment type="similarity">
    <text evidence="1">Belongs to the heat shock protein 70 family.</text>
</comment>
<evidence type="ECO:0000305" key="1"/>
<proteinExistence type="inferred from homology"/>
<name>HSP72_PARLI</name>
<protein>
    <recommendedName>
        <fullName>Heat shock 70 kDa protein II</fullName>
        <shortName>HSP70 II</shortName>
    </recommendedName>
</protein>
<sequence length="372" mass="41347">MAKAPAVGIDLGTTYSCVGVFQHGKVEIIANDQGNRTTPSYVAFTDTERLIGDAAKNKTASNPYRSLDAKRLIGRNFSDTNVKADMKHWPFTVIEEGGRPKIKIEFKGESKTFYAEEISSMVLLKMKETAEAYLGKESVTDAVVTVPAYFNDSQRQATKECGVISGMNILRIINEPTAAAIAYGLDKKGGAERNVLIFDLVGGTFDVSVLTIEEGIFEVKSTSRDTHLGGEDFDNRMVTHSSPEFKRKHKKDITPNKRAVRRLRTACERAKRTLSSSTQAKIEIDSLFEGIDYYTSVTRARFEELNSDLFRGTLEPVENALRDAKLDKEKIHEIVLVGGSTRIPKIQKLQDFFHGKELNKSINPDEAVAIVQ</sequence>
<accession>P22623</accession>
<gene>
    <name type="primary">HSP70II</name>
</gene>
<reference key="1">
    <citation type="journal article" date="1990" name="Gene">
        <title>Sequence of a sea urchin hsp70 gene and its 5' flanking region.</title>
        <authorList>
            <person name="la Rosa M."/>
            <person name="Sconzo G."/>
            <person name="Giudice G."/>
            <person name="Roccheri M.C."/>
            <person name="di Carlo M."/>
        </authorList>
    </citation>
    <scope>NUCLEOTIDE SEQUENCE [GENOMIC DNA]</scope>
    <source>
        <tissue>Gonad</tissue>
    </source>
</reference>
<feature type="chain" id="PRO_0000078316" description="Heat shock 70 kDa protein II">
    <location>
        <begin position="1"/>
        <end position="372" status="greater than"/>
    </location>
</feature>
<feature type="non-terminal residue">
    <location>
        <position position="372"/>
    </location>
</feature>
<keyword id="KW-0067">ATP-binding</keyword>
<keyword id="KW-0547">Nucleotide-binding</keyword>
<keyword id="KW-0346">Stress response</keyword>
<dbReference type="EMBL" id="X16544">
    <property type="protein sequence ID" value="CAA34544.1"/>
    <property type="molecule type" value="Genomic_DNA"/>
</dbReference>
<dbReference type="PIR" id="PQ0138">
    <property type="entry name" value="PQ0138"/>
</dbReference>
<dbReference type="SMR" id="P22623"/>
<dbReference type="GO" id="GO:0005524">
    <property type="term" value="F:ATP binding"/>
    <property type="evidence" value="ECO:0007669"/>
    <property type="project" value="UniProtKB-KW"/>
</dbReference>
<dbReference type="GO" id="GO:0140662">
    <property type="term" value="F:ATP-dependent protein folding chaperone"/>
    <property type="evidence" value="ECO:0007669"/>
    <property type="project" value="InterPro"/>
</dbReference>
<dbReference type="CDD" id="cd10233">
    <property type="entry name" value="ASKHA_NBD_HSP70_HSPA1"/>
    <property type="match status" value="1"/>
</dbReference>
<dbReference type="FunFam" id="3.30.420.40:FF:000172">
    <property type="entry name" value="Heat shock 70 kDa protein"/>
    <property type="match status" value="1"/>
</dbReference>
<dbReference type="FunFam" id="3.30.30.30:FF:000001">
    <property type="entry name" value="heat shock 70 kDa protein-like"/>
    <property type="match status" value="1"/>
</dbReference>
<dbReference type="FunFam" id="3.90.640.10:FF:000134">
    <property type="entry name" value="Heat shock cognate 71 kDa protein"/>
    <property type="match status" value="1"/>
</dbReference>
<dbReference type="FunFam" id="3.30.420.40:FF:000026">
    <property type="entry name" value="Heat shock protein 70"/>
    <property type="match status" value="1"/>
</dbReference>
<dbReference type="Gene3D" id="3.30.30.30">
    <property type="match status" value="1"/>
</dbReference>
<dbReference type="Gene3D" id="3.30.420.40">
    <property type="match status" value="2"/>
</dbReference>
<dbReference type="Gene3D" id="3.90.640.10">
    <property type="entry name" value="Actin, Chain A, domain 4"/>
    <property type="match status" value="1"/>
</dbReference>
<dbReference type="InterPro" id="IPR043129">
    <property type="entry name" value="ATPase_NBD"/>
</dbReference>
<dbReference type="InterPro" id="IPR018181">
    <property type="entry name" value="Heat_shock_70_CS"/>
</dbReference>
<dbReference type="InterPro" id="IPR013126">
    <property type="entry name" value="Hsp_70_fam"/>
</dbReference>
<dbReference type="PANTHER" id="PTHR19375">
    <property type="entry name" value="HEAT SHOCK PROTEIN 70KDA"/>
    <property type="match status" value="1"/>
</dbReference>
<dbReference type="Pfam" id="PF00012">
    <property type="entry name" value="HSP70"/>
    <property type="match status" value="1"/>
</dbReference>
<dbReference type="PRINTS" id="PR00301">
    <property type="entry name" value="HEATSHOCK70"/>
</dbReference>
<dbReference type="SUPFAM" id="SSF53067">
    <property type="entry name" value="Actin-like ATPase domain"/>
    <property type="match status" value="2"/>
</dbReference>
<dbReference type="PROSITE" id="PS00297">
    <property type="entry name" value="HSP70_1"/>
    <property type="match status" value="1"/>
</dbReference>
<dbReference type="PROSITE" id="PS01036">
    <property type="entry name" value="HSP70_3"/>
    <property type="match status" value="1"/>
</dbReference>